<dbReference type="EC" id="1.3.1.89" evidence="1"/>
<dbReference type="EC" id="1.3.1.-" evidence="3"/>
<dbReference type="EMBL" id="CH476594">
    <property type="protein sequence ID" value="EAU39517.1"/>
    <property type="molecule type" value="Genomic_DNA"/>
</dbReference>
<dbReference type="RefSeq" id="XP_001210957.1">
    <property type="nucleotide sequence ID" value="XM_001210957.1"/>
</dbReference>
<dbReference type="SMR" id="Q0CZL3"/>
<dbReference type="STRING" id="341663.Q0CZL3"/>
<dbReference type="EnsemblFungi" id="EAU39517">
    <property type="protein sequence ID" value="EAU39517"/>
    <property type="gene ID" value="ATEG_00871"/>
</dbReference>
<dbReference type="GeneID" id="4355632"/>
<dbReference type="VEuPathDB" id="FungiDB:ATEG_00871"/>
<dbReference type="eggNOG" id="KOG2333">
    <property type="taxonomic scope" value="Eukaryota"/>
</dbReference>
<dbReference type="HOGENOM" id="CLU_013299_7_0_1"/>
<dbReference type="OMA" id="WSYIAEC"/>
<dbReference type="OrthoDB" id="259935at2759"/>
<dbReference type="Proteomes" id="UP000007963">
    <property type="component" value="Unassembled WGS sequence"/>
</dbReference>
<dbReference type="GO" id="GO:0005737">
    <property type="term" value="C:cytoplasm"/>
    <property type="evidence" value="ECO:0007669"/>
    <property type="project" value="UniProtKB-SubCell"/>
</dbReference>
<dbReference type="GO" id="GO:0034399">
    <property type="term" value="C:nuclear periphery"/>
    <property type="evidence" value="ECO:0007669"/>
    <property type="project" value="EnsemblFungi"/>
</dbReference>
<dbReference type="GO" id="GO:0050660">
    <property type="term" value="F:flavin adenine dinucleotide binding"/>
    <property type="evidence" value="ECO:0007669"/>
    <property type="project" value="InterPro"/>
</dbReference>
<dbReference type="GO" id="GO:0106414">
    <property type="term" value="F:mRNA dihydrouridine synthase activity"/>
    <property type="evidence" value="ECO:0007669"/>
    <property type="project" value="RHEA"/>
</dbReference>
<dbReference type="GO" id="GO:0003723">
    <property type="term" value="F:RNA binding"/>
    <property type="evidence" value="ECO:0007669"/>
    <property type="project" value="TreeGrafter"/>
</dbReference>
<dbReference type="GO" id="GO:0102265">
    <property type="term" value="F:tRNA-dihydrouridine47 synthase activity"/>
    <property type="evidence" value="ECO:0007669"/>
    <property type="project" value="UniProtKB-EC"/>
</dbReference>
<dbReference type="GO" id="GO:0008270">
    <property type="term" value="F:zinc ion binding"/>
    <property type="evidence" value="ECO:0007669"/>
    <property type="project" value="UniProtKB-KW"/>
</dbReference>
<dbReference type="GO" id="GO:0006397">
    <property type="term" value="P:mRNA processing"/>
    <property type="evidence" value="ECO:0007669"/>
    <property type="project" value="UniProtKB-KW"/>
</dbReference>
<dbReference type="CDD" id="cd02801">
    <property type="entry name" value="DUS_like_FMN"/>
    <property type="match status" value="1"/>
</dbReference>
<dbReference type="FunFam" id="3.20.20.70:FF:000145">
    <property type="entry name" value="tRNA-dihydrouridine(47) synthase [NAD(P)(+)]"/>
    <property type="match status" value="1"/>
</dbReference>
<dbReference type="Gene3D" id="3.20.20.70">
    <property type="entry name" value="Aldolase class I"/>
    <property type="match status" value="1"/>
</dbReference>
<dbReference type="Gene3D" id="4.10.1000.10">
    <property type="entry name" value="Zinc finger, CCCH-type"/>
    <property type="match status" value="1"/>
</dbReference>
<dbReference type="InterPro" id="IPR013785">
    <property type="entry name" value="Aldolase_TIM"/>
</dbReference>
<dbReference type="InterPro" id="IPR035587">
    <property type="entry name" value="DUS-like_FMN-bd"/>
</dbReference>
<dbReference type="InterPro" id="IPR018517">
    <property type="entry name" value="tRNA_hU_synthase_CS"/>
</dbReference>
<dbReference type="InterPro" id="IPR041367">
    <property type="entry name" value="Znf-CCCH_4"/>
</dbReference>
<dbReference type="InterPro" id="IPR000571">
    <property type="entry name" value="Znf_CCCH"/>
</dbReference>
<dbReference type="PANTHER" id="PTHR45846">
    <property type="entry name" value="TRNA-DIHYDROURIDINE(47) SYNTHASE [NAD(P)(+)]-LIKE"/>
    <property type="match status" value="1"/>
</dbReference>
<dbReference type="PANTHER" id="PTHR45846:SF1">
    <property type="entry name" value="TRNA-DIHYDROURIDINE(47) SYNTHASE [NAD(P)(+)]-LIKE"/>
    <property type="match status" value="1"/>
</dbReference>
<dbReference type="Pfam" id="PF01207">
    <property type="entry name" value="Dus"/>
    <property type="match status" value="2"/>
</dbReference>
<dbReference type="Pfam" id="PF18044">
    <property type="entry name" value="zf-CCCH_4"/>
    <property type="match status" value="1"/>
</dbReference>
<dbReference type="SUPFAM" id="SSF51395">
    <property type="entry name" value="FMN-linked oxidoreductases"/>
    <property type="match status" value="1"/>
</dbReference>
<dbReference type="PROSITE" id="PS01136">
    <property type="entry name" value="UPF0034"/>
    <property type="match status" value="1"/>
</dbReference>
<dbReference type="PROSITE" id="PS50103">
    <property type="entry name" value="ZF_C3H1"/>
    <property type="match status" value="2"/>
</dbReference>
<organism>
    <name type="scientific">Aspergillus terreus (strain NIH 2624 / FGSC A1156)</name>
    <dbReference type="NCBI Taxonomy" id="341663"/>
    <lineage>
        <taxon>Eukaryota</taxon>
        <taxon>Fungi</taxon>
        <taxon>Dikarya</taxon>
        <taxon>Ascomycota</taxon>
        <taxon>Pezizomycotina</taxon>
        <taxon>Eurotiomycetes</taxon>
        <taxon>Eurotiomycetidae</taxon>
        <taxon>Eurotiales</taxon>
        <taxon>Aspergillaceae</taxon>
        <taxon>Aspergillus</taxon>
        <taxon>Aspergillus subgen. Circumdati</taxon>
    </lineage>
</organism>
<accession>Q0CZL3</accession>
<protein>
    <recommendedName>
        <fullName>tRNA-dihydrouridine(47) synthase [NAD(P)(+)]</fullName>
        <ecNumber evidence="1">1.3.1.89</ecNumber>
    </recommendedName>
    <alternativeName>
        <fullName>mRNA-dihydrouridine synthase dus3</fullName>
        <ecNumber evidence="3">1.3.1.-</ecNumber>
    </alternativeName>
    <alternativeName>
        <fullName>tRNA-dihydrouridine synthase 3</fullName>
    </alternativeName>
</protein>
<name>DUS3_ASPTN</name>
<gene>
    <name type="primary">dus3</name>
    <name type="ORF">ATEG_00871</name>
</gene>
<keyword id="KW-0963">Cytoplasm</keyword>
<keyword id="KW-0285">Flavoprotein</keyword>
<keyword id="KW-0288">FMN</keyword>
<keyword id="KW-0479">Metal-binding</keyword>
<keyword id="KW-0507">mRNA processing</keyword>
<keyword id="KW-0520">NAD</keyword>
<keyword id="KW-0521">NADP</keyword>
<keyword id="KW-0539">Nucleus</keyword>
<keyword id="KW-0560">Oxidoreductase</keyword>
<keyword id="KW-1185">Reference proteome</keyword>
<keyword id="KW-0677">Repeat</keyword>
<keyword id="KW-0819">tRNA processing</keyword>
<keyword id="KW-0862">Zinc</keyword>
<keyword id="KW-0863">Zinc-finger</keyword>
<sequence>MTSATSNGQEPASGGAPAPAHEPQNDTHVTDNTGEPPLKKAKLDEPFTLNGDKPPRRKGVAPIKAEYLVDINAIPVSAPEENTDDAAEAAHHEEREDDKKKKPKIRGQNTNRTFGRYQDEKGLCPSRVFAPEFSPGECRFGDKCRFEHDLRTYLKEHKREDLTTFGGVCPVWDARGKCYAGWKCRFVGSHMTERDTPDGRKELVLVEDEERKKKSPRLVPYASEEGLANTISVDDRNALSRKKIKTPRADAYSSWLDKTSKQLEKTLHGRRQNDGGVVEFTKEEREEQRANYTEPPFLPSEKRRLYFGPETPTLAPLTTQGNLPFRRLCVELGAQFVYSEMAMSMPLIQGTKSEWALLRSHETELTPPTISPSDKIVQGYDNSKDMKFGAQIAANKPWQALKATEVLSKFTPNLRVIDLNCGCPIDLLFREGAGSALLEHHSKLEKILRGMNAVSEEIPISVKIRLGVRDNAPNAQKLVERLVLGGHESHLLGLGPCGTAAITLHGRSRQQRYTKQADWGYIAETAALIKNLNKRKDELTDTIYEPDERMLPNGGKVYFLGNGDCFSHQDYDDHINNAGVDSVMIGRGALIKPWLFEEIQTGQYLDKSASERLSLVEKFAKYGLDTWGSDEYGVGITRRFLLEWLSFHRRYVPVGLLEYLPPNIQDRPPAWRGRNEMETLLASDHYKDWIKITEMFLGPAHKDFKFEPKHKSNAYETEG</sequence>
<reference key="1">
    <citation type="submission" date="2005-09" db="EMBL/GenBank/DDBJ databases">
        <title>Annotation of the Aspergillus terreus NIH2624 genome.</title>
        <authorList>
            <person name="Birren B.W."/>
            <person name="Lander E.S."/>
            <person name="Galagan J.E."/>
            <person name="Nusbaum C."/>
            <person name="Devon K."/>
            <person name="Henn M."/>
            <person name="Ma L.-J."/>
            <person name="Jaffe D.B."/>
            <person name="Butler J."/>
            <person name="Alvarez P."/>
            <person name="Gnerre S."/>
            <person name="Grabherr M."/>
            <person name="Kleber M."/>
            <person name="Mauceli E.W."/>
            <person name="Brockman W."/>
            <person name="Rounsley S."/>
            <person name="Young S.K."/>
            <person name="LaButti K."/>
            <person name="Pushparaj V."/>
            <person name="DeCaprio D."/>
            <person name="Crawford M."/>
            <person name="Koehrsen M."/>
            <person name="Engels R."/>
            <person name="Montgomery P."/>
            <person name="Pearson M."/>
            <person name="Howarth C."/>
            <person name="Larson L."/>
            <person name="Luoma S."/>
            <person name="White J."/>
            <person name="Alvarado L."/>
            <person name="Kodira C.D."/>
            <person name="Zeng Q."/>
            <person name="Oleary S."/>
            <person name="Yandava C."/>
            <person name="Denning D.W."/>
            <person name="Nierman W.C."/>
            <person name="Milne T."/>
            <person name="Madden K."/>
        </authorList>
    </citation>
    <scope>NUCLEOTIDE SEQUENCE [LARGE SCALE GENOMIC DNA]</scope>
    <source>
        <strain>NIH 2624 / FGSC A1156</strain>
    </source>
</reference>
<proteinExistence type="inferred from homology"/>
<comment type="function">
    <text evidence="1 3">Catalyzes the synthesis of dihydrouridine, a modified base found in the D-loop of most tRNAs. Specifically modifies U47 in cytoplasmic tRNAs (By similarity). Catalyzes the synthesis of dihydrouridine in some mRNAs, thereby affecting their translation (By similarity).</text>
</comment>
<comment type="catalytic activity">
    <reaction evidence="1">
        <text>5,6-dihydrouridine(47) in tRNA + NAD(+) = uridine(47) in tRNA + NADH + H(+)</text>
        <dbReference type="Rhea" id="RHEA:53364"/>
        <dbReference type="Rhea" id="RHEA-COMP:13539"/>
        <dbReference type="Rhea" id="RHEA-COMP:13540"/>
        <dbReference type="ChEBI" id="CHEBI:15378"/>
        <dbReference type="ChEBI" id="CHEBI:57540"/>
        <dbReference type="ChEBI" id="CHEBI:57945"/>
        <dbReference type="ChEBI" id="CHEBI:65315"/>
        <dbReference type="ChEBI" id="CHEBI:74443"/>
        <dbReference type="EC" id="1.3.1.89"/>
    </reaction>
    <physiologicalReaction direction="right-to-left" evidence="1">
        <dbReference type="Rhea" id="RHEA:53366"/>
    </physiologicalReaction>
</comment>
<comment type="catalytic activity">
    <reaction evidence="1">
        <text>5,6-dihydrouridine(47) in tRNA + NADP(+) = uridine(47) in tRNA + NADPH + H(+)</text>
        <dbReference type="Rhea" id="RHEA:53360"/>
        <dbReference type="Rhea" id="RHEA-COMP:13539"/>
        <dbReference type="Rhea" id="RHEA-COMP:13540"/>
        <dbReference type="ChEBI" id="CHEBI:15378"/>
        <dbReference type="ChEBI" id="CHEBI:57783"/>
        <dbReference type="ChEBI" id="CHEBI:58349"/>
        <dbReference type="ChEBI" id="CHEBI:65315"/>
        <dbReference type="ChEBI" id="CHEBI:74443"/>
        <dbReference type="EC" id="1.3.1.89"/>
    </reaction>
    <physiologicalReaction direction="right-to-left" evidence="1">
        <dbReference type="Rhea" id="RHEA:53362"/>
    </physiologicalReaction>
</comment>
<comment type="catalytic activity">
    <reaction evidence="3">
        <text>a 5,6-dihydrouridine in mRNA + NAD(+) = a uridine in mRNA + NADH + H(+)</text>
        <dbReference type="Rhea" id="RHEA:69851"/>
        <dbReference type="Rhea" id="RHEA-COMP:14658"/>
        <dbReference type="Rhea" id="RHEA-COMP:17789"/>
        <dbReference type="ChEBI" id="CHEBI:15378"/>
        <dbReference type="ChEBI" id="CHEBI:57540"/>
        <dbReference type="ChEBI" id="CHEBI:57945"/>
        <dbReference type="ChEBI" id="CHEBI:65315"/>
        <dbReference type="ChEBI" id="CHEBI:74443"/>
    </reaction>
    <physiologicalReaction direction="right-to-left" evidence="3">
        <dbReference type="Rhea" id="RHEA:69853"/>
    </physiologicalReaction>
</comment>
<comment type="catalytic activity">
    <reaction evidence="3">
        <text>a 5,6-dihydrouridine in mRNA + NADP(+) = a uridine in mRNA + NADPH + H(+)</text>
        <dbReference type="Rhea" id="RHEA:69855"/>
        <dbReference type="Rhea" id="RHEA-COMP:14658"/>
        <dbReference type="Rhea" id="RHEA-COMP:17789"/>
        <dbReference type="ChEBI" id="CHEBI:15378"/>
        <dbReference type="ChEBI" id="CHEBI:57783"/>
        <dbReference type="ChEBI" id="CHEBI:58349"/>
        <dbReference type="ChEBI" id="CHEBI:65315"/>
        <dbReference type="ChEBI" id="CHEBI:74443"/>
    </reaction>
    <physiologicalReaction direction="right-to-left" evidence="3">
        <dbReference type="Rhea" id="RHEA:69857"/>
    </physiologicalReaction>
</comment>
<comment type="cofactor">
    <cofactor evidence="2">
        <name>FMN</name>
        <dbReference type="ChEBI" id="CHEBI:58210"/>
    </cofactor>
</comment>
<comment type="subcellular location">
    <subcellularLocation>
        <location evidence="1">Cytoplasm</location>
    </subcellularLocation>
    <subcellularLocation>
        <location evidence="1">Nucleus</location>
    </subcellularLocation>
</comment>
<comment type="similarity">
    <text evidence="6">Belongs to the Dus family. Dus3 subfamily.</text>
</comment>
<feature type="chain" id="PRO_0000330230" description="tRNA-dihydrouridine(47) synthase [NAD(P)(+)]">
    <location>
        <begin position="1"/>
        <end position="719"/>
    </location>
</feature>
<feature type="zinc finger region" description="C3H1-type 1" evidence="4">
    <location>
        <begin position="118"/>
        <end position="151"/>
    </location>
</feature>
<feature type="zinc finger region" description="C3H1-type 2" evidence="4">
    <location>
        <begin position="168"/>
        <end position="193"/>
    </location>
</feature>
<feature type="region of interest" description="Disordered" evidence="5">
    <location>
        <begin position="1"/>
        <end position="117"/>
    </location>
</feature>
<feature type="compositionally biased region" description="Polar residues" evidence="5">
    <location>
        <begin position="1"/>
        <end position="10"/>
    </location>
</feature>
<feature type="compositionally biased region" description="Basic and acidic residues" evidence="5">
    <location>
        <begin position="88"/>
        <end position="100"/>
    </location>
</feature>
<feature type="active site" description="Proton donor" evidence="2">
    <location>
        <position position="423"/>
    </location>
</feature>
<feature type="binding site" evidence="2">
    <location>
        <begin position="316"/>
        <end position="318"/>
    </location>
    <ligand>
        <name>FMN</name>
        <dbReference type="ChEBI" id="CHEBI:58210"/>
    </ligand>
</feature>
<feature type="binding site" evidence="2">
    <location>
        <position position="391"/>
    </location>
    <ligand>
        <name>FMN</name>
        <dbReference type="ChEBI" id="CHEBI:58210"/>
    </ligand>
</feature>
<feature type="binding site" evidence="2">
    <location>
        <position position="463"/>
    </location>
    <ligand>
        <name>FMN</name>
        <dbReference type="ChEBI" id="CHEBI:58210"/>
    </ligand>
</feature>
<feature type="binding site" evidence="2">
    <location>
        <position position="505"/>
    </location>
    <ligand>
        <name>FMN</name>
        <dbReference type="ChEBI" id="CHEBI:58210"/>
    </ligand>
</feature>
<feature type="binding site" evidence="2">
    <location>
        <begin position="562"/>
        <end position="564"/>
    </location>
    <ligand>
        <name>FMN</name>
        <dbReference type="ChEBI" id="CHEBI:58210"/>
    </ligand>
</feature>
<feature type="binding site" evidence="2">
    <location>
        <begin position="586"/>
        <end position="587"/>
    </location>
    <ligand>
        <name>FMN</name>
        <dbReference type="ChEBI" id="CHEBI:58210"/>
    </ligand>
</feature>
<evidence type="ECO:0000250" key="1">
    <source>
        <dbReference type="UniProtKB" id="Q06053"/>
    </source>
</evidence>
<evidence type="ECO:0000250" key="2">
    <source>
        <dbReference type="UniProtKB" id="Q5SMC7"/>
    </source>
</evidence>
<evidence type="ECO:0000250" key="3">
    <source>
        <dbReference type="UniProtKB" id="Q9UTH9"/>
    </source>
</evidence>
<evidence type="ECO:0000255" key="4">
    <source>
        <dbReference type="PROSITE-ProRule" id="PRU00723"/>
    </source>
</evidence>
<evidence type="ECO:0000256" key="5">
    <source>
        <dbReference type="SAM" id="MobiDB-lite"/>
    </source>
</evidence>
<evidence type="ECO:0000305" key="6"/>